<comment type="function">
    <text evidence="1">E3 UFM1-protein ligase that mediates ufmylation of target proteins.</text>
</comment>
<comment type="similarity">
    <text evidence="3">Belongs to the UFL1 family.</text>
</comment>
<comment type="sequence caution" evidence="3">
    <conflict type="erroneous gene model prediction">
        <sequence resource="EMBL-CDS" id="AAV44207"/>
    </conflict>
</comment>
<comment type="sequence caution" evidence="3">
    <conflict type="erroneous gene model prediction">
        <sequence resource="EMBL-CDS" id="BAH92912"/>
    </conflict>
</comment>
<protein>
    <recommendedName>
        <fullName>E3 UFM1-protein ligase 1 homolog</fullName>
        <ecNumber>2.3.2.-</ecNumber>
    </recommendedName>
    <alternativeName>
        <fullName evidence="3">E3 UFM1-protein transferase 1 homolog</fullName>
    </alternativeName>
</protein>
<dbReference type="EC" id="2.3.2.-"/>
<dbReference type="EMBL" id="AC078977">
    <property type="protein sequence ID" value="AAV44207.1"/>
    <property type="status" value="ALT_SEQ"/>
    <property type="molecule type" value="Genomic_DNA"/>
</dbReference>
<dbReference type="EMBL" id="AP008211">
    <property type="protein sequence ID" value="BAH92912.1"/>
    <property type="status" value="ALT_SEQ"/>
    <property type="molecule type" value="Genomic_DNA"/>
</dbReference>
<dbReference type="EMBL" id="AP014961">
    <property type="protein sequence ID" value="BAS91987.1"/>
    <property type="molecule type" value="Genomic_DNA"/>
</dbReference>
<dbReference type="EMBL" id="CM000142">
    <property type="protein sequence ID" value="EEE62120.1"/>
    <property type="molecule type" value="Genomic_DNA"/>
</dbReference>
<dbReference type="SMR" id="B9FM64"/>
<dbReference type="FunCoup" id="B9FM64">
    <property type="interactions" value="2992"/>
</dbReference>
<dbReference type="STRING" id="39947.B9FM64"/>
<dbReference type="PaxDb" id="39947-B9FM64"/>
<dbReference type="EnsemblPlants" id="Os05t0117600-00">
    <property type="protein sequence ID" value="Os05t0117600-00"/>
    <property type="gene ID" value="Os05g0117600"/>
</dbReference>
<dbReference type="GeneID" id="9266232"/>
<dbReference type="Gramene" id="Os05t0117600-00">
    <property type="protein sequence ID" value="Os05t0117600-00"/>
    <property type="gene ID" value="Os05g0117600"/>
</dbReference>
<dbReference type="KEGG" id="dosa:Os05g0117600"/>
<dbReference type="KEGG" id="osa:9266232"/>
<dbReference type="eggNOG" id="KOG2235">
    <property type="taxonomic scope" value="Eukaryota"/>
</dbReference>
<dbReference type="HOGENOM" id="CLU_012417_0_0_1"/>
<dbReference type="InParanoid" id="B9FM64"/>
<dbReference type="OMA" id="CILHASG"/>
<dbReference type="OrthoDB" id="10258297at2759"/>
<dbReference type="Proteomes" id="UP000000763">
    <property type="component" value="Chromosome 5"/>
</dbReference>
<dbReference type="Proteomes" id="UP000007752">
    <property type="component" value="Chromosome 5"/>
</dbReference>
<dbReference type="Proteomes" id="UP000059680">
    <property type="component" value="Chromosome 5"/>
</dbReference>
<dbReference type="GO" id="GO:0005789">
    <property type="term" value="C:endoplasmic reticulum membrane"/>
    <property type="evidence" value="ECO:0000318"/>
    <property type="project" value="GO_Central"/>
</dbReference>
<dbReference type="GO" id="GO:0061666">
    <property type="term" value="F:UFM1 ligase activity"/>
    <property type="evidence" value="ECO:0007669"/>
    <property type="project" value="InterPro"/>
</dbReference>
<dbReference type="GO" id="GO:0071568">
    <property type="term" value="F:UFM1 transferase activity"/>
    <property type="evidence" value="ECO:0000318"/>
    <property type="project" value="GO_Central"/>
</dbReference>
<dbReference type="GO" id="GO:0071569">
    <property type="term" value="P:protein ufmylation"/>
    <property type="evidence" value="ECO:0007669"/>
    <property type="project" value="InterPro"/>
</dbReference>
<dbReference type="GO" id="GO:0034976">
    <property type="term" value="P:response to endoplasmic reticulum stress"/>
    <property type="evidence" value="ECO:0000318"/>
    <property type="project" value="GO_Central"/>
</dbReference>
<dbReference type="GO" id="GO:0061709">
    <property type="term" value="P:reticulophagy"/>
    <property type="evidence" value="ECO:0000318"/>
    <property type="project" value="GO_Central"/>
</dbReference>
<dbReference type="InterPro" id="IPR018611">
    <property type="entry name" value="Ufl1"/>
</dbReference>
<dbReference type="InterPro" id="IPR056761">
    <property type="entry name" value="Ufl1-like_C"/>
</dbReference>
<dbReference type="InterPro" id="IPR056580">
    <property type="entry name" value="Ufl1_dom"/>
</dbReference>
<dbReference type="InterPro" id="IPR056579">
    <property type="entry name" value="Ufl1_N"/>
</dbReference>
<dbReference type="PANTHER" id="PTHR31057">
    <property type="entry name" value="E3 UFM1-PROTEIN LIGASE 1"/>
    <property type="match status" value="1"/>
</dbReference>
<dbReference type="PANTHER" id="PTHR31057:SF0">
    <property type="entry name" value="E3 UFM1-PROTEIN LIGASE 1"/>
    <property type="match status" value="1"/>
</dbReference>
<dbReference type="Pfam" id="PF09743">
    <property type="entry name" value="E3_UFM1_ligase"/>
    <property type="match status" value="1"/>
</dbReference>
<dbReference type="Pfam" id="PF23659">
    <property type="entry name" value="UFL1"/>
    <property type="match status" value="1"/>
</dbReference>
<dbReference type="Pfam" id="PF25041">
    <property type="entry name" value="UFL1_C"/>
    <property type="match status" value="1"/>
</dbReference>
<organism>
    <name type="scientific">Oryza sativa subsp. japonica</name>
    <name type="common">Rice</name>
    <dbReference type="NCBI Taxonomy" id="39947"/>
    <lineage>
        <taxon>Eukaryota</taxon>
        <taxon>Viridiplantae</taxon>
        <taxon>Streptophyta</taxon>
        <taxon>Embryophyta</taxon>
        <taxon>Tracheophyta</taxon>
        <taxon>Spermatophyta</taxon>
        <taxon>Magnoliopsida</taxon>
        <taxon>Liliopsida</taxon>
        <taxon>Poales</taxon>
        <taxon>Poaceae</taxon>
        <taxon>BOP clade</taxon>
        <taxon>Oryzoideae</taxon>
        <taxon>Oryzeae</taxon>
        <taxon>Oryzinae</taxon>
        <taxon>Oryza</taxon>
        <taxon>Oryza sativa</taxon>
    </lineage>
</organism>
<evidence type="ECO:0000250" key="1">
    <source>
        <dbReference type="UniProtKB" id="O94874"/>
    </source>
</evidence>
<evidence type="ECO:0000256" key="2">
    <source>
        <dbReference type="SAM" id="MobiDB-lite"/>
    </source>
</evidence>
<evidence type="ECO:0000305" key="3"/>
<name>UFL1_ORYSJ</name>
<keyword id="KW-1185">Reference proteome</keyword>
<keyword id="KW-0808">Transferase</keyword>
<keyword id="KW-0833">Ubl conjugation pathway</keyword>
<proteinExistence type="inferred from homology"/>
<feature type="chain" id="PRO_0000391896" description="E3 UFM1-protein ligase 1 homolog">
    <location>
        <begin position="1"/>
        <end position="812"/>
    </location>
</feature>
<feature type="region of interest" description="Disordered" evidence="2">
    <location>
        <begin position="389"/>
        <end position="495"/>
    </location>
</feature>
<feature type="compositionally biased region" description="Basic and acidic residues" evidence="2">
    <location>
        <begin position="403"/>
        <end position="415"/>
    </location>
</feature>
<feature type="compositionally biased region" description="Basic and acidic residues" evidence="2">
    <location>
        <begin position="475"/>
        <end position="491"/>
    </location>
</feature>
<reference key="1">
    <citation type="journal article" date="2005" name="Mol. Genet. Genomics">
        <title>A fine physical map of the rice chromosome 5.</title>
        <authorList>
            <person name="Cheng C.-H."/>
            <person name="Chung M.C."/>
            <person name="Liu S.-M."/>
            <person name="Chen S.-K."/>
            <person name="Kao F.Y."/>
            <person name="Lin S.-J."/>
            <person name="Hsiao S.-H."/>
            <person name="Tseng I.C."/>
            <person name="Hsing Y.-I.C."/>
            <person name="Wu H.-P."/>
            <person name="Chen C.-S."/>
            <person name="Shaw J.-F."/>
            <person name="Wu J."/>
            <person name="Matsumoto T."/>
            <person name="Sasaki T."/>
            <person name="Chen H.-C."/>
            <person name="Chow T.-Y."/>
        </authorList>
    </citation>
    <scope>NUCLEOTIDE SEQUENCE [LARGE SCALE GENOMIC DNA]</scope>
    <source>
        <strain>cv. Nipponbare</strain>
    </source>
</reference>
<reference key="2">
    <citation type="journal article" date="2005" name="Nature">
        <title>The map-based sequence of the rice genome.</title>
        <authorList>
            <consortium name="International rice genome sequencing project (IRGSP)"/>
        </authorList>
    </citation>
    <scope>NUCLEOTIDE SEQUENCE [LARGE SCALE GENOMIC DNA]</scope>
    <source>
        <strain>cv. Nipponbare</strain>
    </source>
</reference>
<reference key="3">
    <citation type="journal article" date="2008" name="Nucleic Acids Res.">
        <title>The rice annotation project database (RAP-DB): 2008 update.</title>
        <authorList>
            <consortium name="The rice annotation project (RAP)"/>
        </authorList>
    </citation>
    <scope>GENOME REANNOTATION</scope>
    <source>
        <strain>cv. Nipponbare</strain>
    </source>
</reference>
<reference key="4">
    <citation type="journal article" date="2013" name="Rice">
        <title>Improvement of the Oryza sativa Nipponbare reference genome using next generation sequence and optical map data.</title>
        <authorList>
            <person name="Kawahara Y."/>
            <person name="de la Bastide M."/>
            <person name="Hamilton J.P."/>
            <person name="Kanamori H."/>
            <person name="McCombie W.R."/>
            <person name="Ouyang S."/>
            <person name="Schwartz D.C."/>
            <person name="Tanaka T."/>
            <person name="Wu J."/>
            <person name="Zhou S."/>
            <person name="Childs K.L."/>
            <person name="Davidson R.M."/>
            <person name="Lin H."/>
            <person name="Quesada-Ocampo L."/>
            <person name="Vaillancourt B."/>
            <person name="Sakai H."/>
            <person name="Lee S.S."/>
            <person name="Kim J."/>
            <person name="Numa H."/>
            <person name="Itoh T."/>
            <person name="Buell C.R."/>
            <person name="Matsumoto T."/>
        </authorList>
    </citation>
    <scope>GENOME REANNOTATION</scope>
    <source>
        <strain>cv. Nipponbare</strain>
    </source>
</reference>
<reference key="5">
    <citation type="journal article" date="2005" name="PLoS Biol.">
        <title>The genomes of Oryza sativa: a history of duplications.</title>
        <authorList>
            <person name="Yu J."/>
            <person name="Wang J."/>
            <person name="Lin W."/>
            <person name="Li S."/>
            <person name="Li H."/>
            <person name="Zhou J."/>
            <person name="Ni P."/>
            <person name="Dong W."/>
            <person name="Hu S."/>
            <person name="Zeng C."/>
            <person name="Zhang J."/>
            <person name="Zhang Y."/>
            <person name="Li R."/>
            <person name="Xu Z."/>
            <person name="Li S."/>
            <person name="Li X."/>
            <person name="Zheng H."/>
            <person name="Cong L."/>
            <person name="Lin L."/>
            <person name="Yin J."/>
            <person name="Geng J."/>
            <person name="Li G."/>
            <person name="Shi J."/>
            <person name="Liu J."/>
            <person name="Lv H."/>
            <person name="Li J."/>
            <person name="Wang J."/>
            <person name="Deng Y."/>
            <person name="Ran L."/>
            <person name="Shi X."/>
            <person name="Wang X."/>
            <person name="Wu Q."/>
            <person name="Li C."/>
            <person name="Ren X."/>
            <person name="Wang J."/>
            <person name="Wang X."/>
            <person name="Li D."/>
            <person name="Liu D."/>
            <person name="Zhang X."/>
            <person name="Ji Z."/>
            <person name="Zhao W."/>
            <person name="Sun Y."/>
            <person name="Zhang Z."/>
            <person name="Bao J."/>
            <person name="Han Y."/>
            <person name="Dong L."/>
            <person name="Ji J."/>
            <person name="Chen P."/>
            <person name="Wu S."/>
            <person name="Liu J."/>
            <person name="Xiao Y."/>
            <person name="Bu D."/>
            <person name="Tan J."/>
            <person name="Yang L."/>
            <person name="Ye C."/>
            <person name="Zhang J."/>
            <person name="Xu J."/>
            <person name="Zhou Y."/>
            <person name="Yu Y."/>
            <person name="Zhang B."/>
            <person name="Zhuang S."/>
            <person name="Wei H."/>
            <person name="Liu B."/>
            <person name="Lei M."/>
            <person name="Yu H."/>
            <person name="Li Y."/>
            <person name="Xu H."/>
            <person name="Wei S."/>
            <person name="He X."/>
            <person name="Fang L."/>
            <person name="Zhang Z."/>
            <person name="Zhang Y."/>
            <person name="Huang X."/>
            <person name="Su Z."/>
            <person name="Tong W."/>
            <person name="Li J."/>
            <person name="Tong Z."/>
            <person name="Li S."/>
            <person name="Ye J."/>
            <person name="Wang L."/>
            <person name="Fang L."/>
            <person name="Lei T."/>
            <person name="Chen C.-S."/>
            <person name="Chen H.-C."/>
            <person name="Xu Z."/>
            <person name="Li H."/>
            <person name="Huang H."/>
            <person name="Zhang F."/>
            <person name="Xu H."/>
            <person name="Li N."/>
            <person name="Zhao C."/>
            <person name="Li S."/>
            <person name="Dong L."/>
            <person name="Huang Y."/>
            <person name="Li L."/>
            <person name="Xi Y."/>
            <person name="Qi Q."/>
            <person name="Li W."/>
            <person name="Zhang B."/>
            <person name="Hu W."/>
            <person name="Zhang Y."/>
            <person name="Tian X."/>
            <person name="Jiao Y."/>
            <person name="Liang X."/>
            <person name="Jin J."/>
            <person name="Gao L."/>
            <person name="Zheng W."/>
            <person name="Hao B."/>
            <person name="Liu S.-M."/>
            <person name="Wang W."/>
            <person name="Yuan L."/>
            <person name="Cao M."/>
            <person name="McDermott J."/>
            <person name="Samudrala R."/>
            <person name="Wang J."/>
            <person name="Wong G.K.-S."/>
            <person name="Yang H."/>
        </authorList>
    </citation>
    <scope>NUCLEOTIDE SEQUENCE [LARGE SCALE GENOMIC DNA]</scope>
    <source>
        <strain>cv. Nipponbare</strain>
    </source>
</reference>
<accession>B9FM64</accession>
<accession>A0A0P0WHI1</accession>
<accession>C7J268</accession>
<accession>Q5W7C7</accession>
<sequence>MDAELLELQRQLEAAQSARSSVRLSERNVVELVQKLQERGIIDFELLHTTSGKEYITSDHLKHEIKMEIKKRGRASLVDLSDILGVDLYHVERQSQKVVADDPSLMLINGEIMSQSYWDTVTEEINEKLQERSQIALAEIAAQLHIGSELVVNILEPRLGTIVKGRLEGGQLYTPAYVSRITAMVRGAARGITVPTNLPSVWNSLQLQLQEMHGASGVSVEGSFFQSIFNGLLKEGVVLGSVRAGVQWTPAVFAHAQKESVDAFFSQNSYIGYEVLQKLAIPQPKQYLEARYPDGIALEAVFVHPSVVDMLDAAVGDTIENGQWIDALSVLPSYITGPDATKILSLCPSLQKAIKSSKAVVFGESCVFSNAFIKGIFDRLEKEMDSFGIKHSAGQGKPSNMSSEHRIGSDGKDLGDNDTSSIGASSDKGPKKKRGKVSGSAKGAAVEKDDDNEESIPVKGKKAHRKNKDAGSSGDAKHGGKKASEKTKEDNTNIFPDDLIEQKVLTVAPELEELGGSDDLNGPLKLLSSHLRPMLMDAWMKKRNTMLSENAERRRRLLDNLQKQLDEAVLDMQLYEKSLDVFEDDPATSAILHKHLLRTMGAPVVDKILLTLHKDNKLKNGMDVEDSEENVQLSTADRTSLAKDLPGSLSVKAQALAETLEGKRFDSFMDALRDTAEESGLLFKKLDKRLERSMLHSYRKDLTAQVSSENDPISFLPKVVALLFLQAYNKALQAPGRAVGAVIALLKDKIPAPTYKVLADYHSTTVKVLALQAAATEDGEDCATDRMLERKEDLEERLMPELKSLVLGTSKE</sequence>
<gene>
    <name type="ordered locus">Os05g0117600</name>
    <name type="ordered locus">LOC_Os05g02650</name>
    <name type="ORF">OsJ_16906</name>
    <name type="ORF">P0496H07.16</name>
</gene>